<comment type="function">
    <text evidence="1">Catalyzes the interconversion of 2-phosphoglycerate and 3-phosphoglycerate.</text>
</comment>
<comment type="catalytic activity">
    <reaction evidence="1">
        <text>(2R)-2-phosphoglycerate = (2R)-3-phosphoglycerate</text>
        <dbReference type="Rhea" id="RHEA:15901"/>
        <dbReference type="ChEBI" id="CHEBI:58272"/>
        <dbReference type="ChEBI" id="CHEBI:58289"/>
        <dbReference type="EC" id="5.4.2.11"/>
    </reaction>
</comment>
<comment type="pathway">
    <text evidence="1">Carbohydrate degradation; glycolysis; pyruvate from D-glyceraldehyde 3-phosphate: step 3/5.</text>
</comment>
<comment type="subunit">
    <text evidence="1">Homodimer.</text>
</comment>
<comment type="similarity">
    <text evidence="1">Belongs to the phosphoglycerate mutase family. BPG-dependent PGAM subfamily.</text>
</comment>
<gene>
    <name evidence="1" type="primary">gpmA</name>
    <name type="ordered locus">BAbS19_II09390</name>
</gene>
<reference key="1">
    <citation type="journal article" date="2008" name="PLoS ONE">
        <title>Genome sequence of Brucella abortus vaccine strain S19 compared to virulent strains yields candidate virulence genes.</title>
        <authorList>
            <person name="Crasta O.R."/>
            <person name="Folkerts O."/>
            <person name="Fei Z."/>
            <person name="Mane S.P."/>
            <person name="Evans C."/>
            <person name="Martino-Catt S."/>
            <person name="Bricker B."/>
            <person name="Yu G."/>
            <person name="Du L."/>
            <person name="Sobral B.W."/>
        </authorList>
    </citation>
    <scope>NUCLEOTIDE SEQUENCE [LARGE SCALE GENOMIC DNA]</scope>
    <source>
        <strain>S19</strain>
    </source>
</reference>
<sequence>MSRTLVLVRHGQSEWNLKNLFTGWRDPGLTEQGHAEAKAAGQRLKAAGLKFDIAYTSALSRAQVTCQHILDELGQPGLETIRDQALNERDYGDLSGLNKDDARAKWGEEQVHIWRRSYDVPPPGGESLKDTGARVWPYYLHTIQPHVLREETVLVAAHGNSLRALIMALDGLTPEQILKQELNTGVPIIYRLNADSTVASKEILSA</sequence>
<protein>
    <recommendedName>
        <fullName evidence="1">2,3-bisphosphoglycerate-dependent phosphoglycerate mutase</fullName>
        <shortName evidence="1">BPG-dependent PGAM</shortName>
        <shortName evidence="1">PGAM</shortName>
        <shortName evidence="1">Phosphoglyceromutase</shortName>
        <shortName evidence="1">dPGM</shortName>
        <ecNumber evidence="1">5.4.2.11</ecNumber>
    </recommendedName>
</protein>
<feature type="chain" id="PRO_1000135926" description="2,3-bisphosphoglycerate-dependent phosphoglycerate mutase">
    <location>
        <begin position="1"/>
        <end position="206"/>
    </location>
</feature>
<feature type="active site" description="Tele-phosphohistidine intermediate" evidence="1">
    <location>
        <position position="10"/>
    </location>
</feature>
<feature type="active site" description="Proton donor/acceptor" evidence="1">
    <location>
        <position position="88"/>
    </location>
</feature>
<feature type="binding site" evidence="1">
    <location>
        <begin position="9"/>
        <end position="16"/>
    </location>
    <ligand>
        <name>substrate</name>
    </ligand>
</feature>
<feature type="binding site" evidence="1">
    <location>
        <begin position="22"/>
        <end position="23"/>
    </location>
    <ligand>
        <name>substrate</name>
    </ligand>
</feature>
<feature type="binding site" evidence="1">
    <location>
        <position position="61"/>
    </location>
    <ligand>
        <name>substrate</name>
    </ligand>
</feature>
<feature type="binding site" evidence="1">
    <location>
        <begin position="88"/>
        <end position="91"/>
    </location>
    <ligand>
        <name>substrate</name>
    </ligand>
</feature>
<feature type="binding site" evidence="1">
    <location>
        <position position="99"/>
    </location>
    <ligand>
        <name>substrate</name>
    </ligand>
</feature>
<feature type="binding site" evidence="1">
    <location>
        <begin position="115"/>
        <end position="116"/>
    </location>
    <ligand>
        <name>substrate</name>
    </ligand>
</feature>
<feature type="binding site" evidence="1">
    <location>
        <begin position="159"/>
        <end position="160"/>
    </location>
    <ligand>
        <name>substrate</name>
    </ligand>
</feature>
<feature type="site" description="Transition state stabilizer" evidence="1">
    <location>
        <position position="158"/>
    </location>
</feature>
<evidence type="ECO:0000255" key="1">
    <source>
        <dbReference type="HAMAP-Rule" id="MF_01039"/>
    </source>
</evidence>
<keyword id="KW-0312">Gluconeogenesis</keyword>
<keyword id="KW-0324">Glycolysis</keyword>
<keyword id="KW-0413">Isomerase</keyword>
<name>GPMA_BRUA1</name>
<accession>B2SC37</accession>
<proteinExistence type="inferred from homology"/>
<dbReference type="EC" id="5.4.2.11" evidence="1"/>
<dbReference type="EMBL" id="CP000888">
    <property type="protein sequence ID" value="ACD74424.1"/>
    <property type="molecule type" value="Genomic_DNA"/>
</dbReference>
<dbReference type="RefSeq" id="WP_002965600.1">
    <property type="nucleotide sequence ID" value="NC_010740.1"/>
</dbReference>
<dbReference type="SMR" id="B2SC37"/>
<dbReference type="KEGG" id="bmc:BAbS19_II09390"/>
<dbReference type="HOGENOM" id="CLU_033323_1_4_5"/>
<dbReference type="UniPathway" id="UPA00109">
    <property type="reaction ID" value="UER00186"/>
</dbReference>
<dbReference type="Proteomes" id="UP000002565">
    <property type="component" value="Chromosome 2"/>
</dbReference>
<dbReference type="GO" id="GO:0004619">
    <property type="term" value="F:phosphoglycerate mutase activity"/>
    <property type="evidence" value="ECO:0007669"/>
    <property type="project" value="UniProtKB-EC"/>
</dbReference>
<dbReference type="GO" id="GO:0006094">
    <property type="term" value="P:gluconeogenesis"/>
    <property type="evidence" value="ECO:0007669"/>
    <property type="project" value="UniProtKB-UniRule"/>
</dbReference>
<dbReference type="GO" id="GO:0006096">
    <property type="term" value="P:glycolytic process"/>
    <property type="evidence" value="ECO:0007669"/>
    <property type="project" value="UniProtKB-UniRule"/>
</dbReference>
<dbReference type="CDD" id="cd07067">
    <property type="entry name" value="HP_PGM_like"/>
    <property type="match status" value="1"/>
</dbReference>
<dbReference type="Gene3D" id="3.40.50.1240">
    <property type="entry name" value="Phosphoglycerate mutase-like"/>
    <property type="match status" value="1"/>
</dbReference>
<dbReference type="HAMAP" id="MF_01039">
    <property type="entry name" value="PGAM_GpmA"/>
    <property type="match status" value="1"/>
</dbReference>
<dbReference type="InterPro" id="IPR013078">
    <property type="entry name" value="His_Pase_superF_clade-1"/>
</dbReference>
<dbReference type="InterPro" id="IPR029033">
    <property type="entry name" value="His_PPase_superfam"/>
</dbReference>
<dbReference type="InterPro" id="IPR001345">
    <property type="entry name" value="PG/BPGM_mutase_AS"/>
</dbReference>
<dbReference type="InterPro" id="IPR005952">
    <property type="entry name" value="Phosphogly_mut1"/>
</dbReference>
<dbReference type="NCBIfam" id="TIGR01258">
    <property type="entry name" value="pgm_1"/>
    <property type="match status" value="1"/>
</dbReference>
<dbReference type="NCBIfam" id="NF002339">
    <property type="entry name" value="PRK01295.1"/>
    <property type="match status" value="1"/>
</dbReference>
<dbReference type="PANTHER" id="PTHR11931">
    <property type="entry name" value="PHOSPHOGLYCERATE MUTASE"/>
    <property type="match status" value="1"/>
</dbReference>
<dbReference type="Pfam" id="PF00300">
    <property type="entry name" value="His_Phos_1"/>
    <property type="match status" value="1"/>
</dbReference>
<dbReference type="PIRSF" id="PIRSF000709">
    <property type="entry name" value="6PFK_2-Ptase"/>
    <property type="match status" value="1"/>
</dbReference>
<dbReference type="SMART" id="SM00855">
    <property type="entry name" value="PGAM"/>
    <property type="match status" value="1"/>
</dbReference>
<dbReference type="SUPFAM" id="SSF53254">
    <property type="entry name" value="Phosphoglycerate mutase-like"/>
    <property type="match status" value="1"/>
</dbReference>
<dbReference type="PROSITE" id="PS00175">
    <property type="entry name" value="PG_MUTASE"/>
    <property type="match status" value="1"/>
</dbReference>
<organism>
    <name type="scientific">Brucella abortus (strain S19)</name>
    <dbReference type="NCBI Taxonomy" id="430066"/>
    <lineage>
        <taxon>Bacteria</taxon>
        <taxon>Pseudomonadati</taxon>
        <taxon>Pseudomonadota</taxon>
        <taxon>Alphaproteobacteria</taxon>
        <taxon>Hyphomicrobiales</taxon>
        <taxon>Brucellaceae</taxon>
        <taxon>Brucella/Ochrobactrum group</taxon>
        <taxon>Brucella</taxon>
    </lineage>
</organism>